<accession>Q9HM89</accession>
<accession>P48863</accession>
<gene>
    <name evidence="2" type="primary">tuf</name>
    <name type="synonym">eef1a</name>
    <name type="ordered locus">VNG_2649G</name>
</gene>
<evidence type="ECO:0000250" key="1"/>
<evidence type="ECO:0000255" key="2">
    <source>
        <dbReference type="HAMAP-Rule" id="MF_00118"/>
    </source>
</evidence>
<evidence type="ECO:0000305" key="3"/>
<feature type="chain" id="PRO_0000090978" description="Elongation factor 1-alpha">
    <location>
        <begin position="1"/>
        <end position="421"/>
    </location>
</feature>
<feature type="domain" description="tr-type G">
    <location>
        <begin position="4"/>
        <end position="220"/>
    </location>
</feature>
<feature type="region of interest" description="G1" evidence="1">
    <location>
        <begin position="13"/>
        <end position="20"/>
    </location>
</feature>
<feature type="region of interest" description="G2" evidence="1">
    <location>
        <begin position="69"/>
        <end position="73"/>
    </location>
</feature>
<feature type="region of interest" description="G3" evidence="1">
    <location>
        <begin position="90"/>
        <end position="93"/>
    </location>
</feature>
<feature type="region of interest" description="G4" evidence="1">
    <location>
        <begin position="145"/>
        <end position="148"/>
    </location>
</feature>
<feature type="region of interest" description="G5" evidence="1">
    <location>
        <begin position="184"/>
        <end position="186"/>
    </location>
</feature>
<feature type="binding site" evidence="2">
    <location>
        <begin position="13"/>
        <end position="20"/>
    </location>
    <ligand>
        <name>GTP</name>
        <dbReference type="ChEBI" id="CHEBI:37565"/>
    </ligand>
</feature>
<feature type="binding site" evidence="2">
    <location>
        <position position="20"/>
    </location>
    <ligand>
        <name>Mg(2+)</name>
        <dbReference type="ChEBI" id="CHEBI:18420"/>
    </ligand>
</feature>
<feature type="binding site" evidence="2">
    <location>
        <begin position="90"/>
        <end position="94"/>
    </location>
    <ligand>
        <name>GTP</name>
        <dbReference type="ChEBI" id="CHEBI:37565"/>
    </ligand>
</feature>
<feature type="binding site" evidence="2">
    <location>
        <begin position="145"/>
        <end position="148"/>
    </location>
    <ligand>
        <name>GTP</name>
        <dbReference type="ChEBI" id="CHEBI:37565"/>
    </ligand>
</feature>
<feature type="sequence conflict" description="In Ref. 1; BAA06845." evidence="3" ref="1">
    <original>K</original>
    <variation>E</variation>
    <location>
        <position position="48"/>
    </location>
</feature>
<protein>
    <recommendedName>
        <fullName evidence="2">Elongation factor 1-alpha</fullName>
        <shortName evidence="2">EF-1-alpha</shortName>
        <ecNumber evidence="2">3.6.5.3</ecNumber>
    </recommendedName>
    <alternativeName>
        <fullName evidence="2">Elongation factor Tu</fullName>
        <shortName evidence="2">EF-Tu</shortName>
    </alternativeName>
</protein>
<sequence length="421" mass="45479">MSDNRHQNLAVIGHVDHGKSTMVGRLLYETGSVPEHVIEQHKEEAEEKGKGGFEFAYVMDNLAEERERGVTIDIAHQEFTTDEYEFTIVDCPGHRDFVKNMITGASQADNAVLVVAADDGVAPQTREHVFLSRTLGIDELIVAVNKMDVVDYDESKYNEVVSGVKDLFGQVGFNPDDAKFIATSAFEGDNVSDHSDNTPWYDGPTLLEALNGLPVPQPPTDADLRLPIQDVYTISGIGTVPVGRIETGVMNTGDNVSFQPSDVGGEVKTIEMHHEEVPNAEPGDNVGFNVRGIGKDDIRRGDVCGPADDPPSVADTFQAQVVVMQHPSVITAGYTPVFHAHTAQVACTIESIDKKMDPASGETQEENPDFIQSGDAAVVTVRPQKPLSLEPSSEIPELGSFAVRDMGQTIAAGKVLDVDEA</sequence>
<name>EF1A_HALSA</name>
<reference key="1">
    <citation type="journal article" date="1995" name="Biochem. Mol. Biol. Int.">
        <title>Organization and nucleotide sequence of a gene cluster comprising the translation elongation factor 1 alpha, ribosomal protein S10 and tRNA(Ala) from Halobacterium halobium.</title>
        <authorList>
            <person name="Fujita T."/>
            <person name="Itoh T."/>
        </authorList>
    </citation>
    <scope>NUCLEOTIDE SEQUENCE [GENOMIC DNA]</scope>
    <source>
        <strain>A9</strain>
    </source>
</reference>
<reference key="2">
    <citation type="journal article" date="2000" name="Proc. Natl. Acad. Sci. U.S.A.">
        <title>Genome sequence of Halobacterium species NRC-1.</title>
        <authorList>
            <person name="Ng W.V."/>
            <person name="Kennedy S.P."/>
            <person name="Mahairas G.G."/>
            <person name="Berquist B."/>
            <person name="Pan M."/>
            <person name="Shukla H.D."/>
            <person name="Lasky S.R."/>
            <person name="Baliga N.S."/>
            <person name="Thorsson V."/>
            <person name="Sbrogna J."/>
            <person name="Swartzell S."/>
            <person name="Weir D."/>
            <person name="Hall J."/>
            <person name="Dahl T.A."/>
            <person name="Welti R."/>
            <person name="Goo Y.A."/>
            <person name="Leithauser B."/>
            <person name="Keller K."/>
            <person name="Cruz R."/>
            <person name="Danson M.J."/>
            <person name="Hough D.W."/>
            <person name="Maddocks D.G."/>
            <person name="Jablonski P.E."/>
            <person name="Krebs M.P."/>
            <person name="Angevine C.M."/>
            <person name="Dale H."/>
            <person name="Isenbarger T.A."/>
            <person name="Peck R.F."/>
            <person name="Pohlschroder M."/>
            <person name="Spudich J.L."/>
            <person name="Jung K.-H."/>
            <person name="Alam M."/>
            <person name="Freitas T."/>
            <person name="Hou S."/>
            <person name="Daniels C.J."/>
            <person name="Dennis P.P."/>
            <person name="Omer A.D."/>
            <person name="Ebhardt H."/>
            <person name="Lowe T.M."/>
            <person name="Liang P."/>
            <person name="Riley M."/>
            <person name="Hood L."/>
            <person name="DasSarma S."/>
        </authorList>
    </citation>
    <scope>NUCLEOTIDE SEQUENCE [LARGE SCALE GENOMIC DNA]</scope>
    <source>
        <strain>ATCC 700922 / JCM 11081 / NRC-1</strain>
    </source>
</reference>
<organism>
    <name type="scientific">Halobacterium salinarum (strain ATCC 700922 / JCM 11081 / NRC-1)</name>
    <name type="common">Halobacterium halobium</name>
    <dbReference type="NCBI Taxonomy" id="64091"/>
    <lineage>
        <taxon>Archaea</taxon>
        <taxon>Methanobacteriati</taxon>
        <taxon>Methanobacteriota</taxon>
        <taxon>Stenosarchaea group</taxon>
        <taxon>Halobacteria</taxon>
        <taxon>Halobacteriales</taxon>
        <taxon>Halobacteriaceae</taxon>
        <taxon>Halobacterium</taxon>
        <taxon>Halobacterium salinarum NRC-34001</taxon>
    </lineage>
</organism>
<comment type="function">
    <text evidence="2">GTP hydrolase that promotes the GTP-dependent binding of aminoacyl-tRNA to the A-site of ribosomes during protein biosynthesis.</text>
</comment>
<comment type="catalytic activity">
    <reaction evidence="2">
        <text>GTP + H2O = GDP + phosphate + H(+)</text>
        <dbReference type="Rhea" id="RHEA:19669"/>
        <dbReference type="ChEBI" id="CHEBI:15377"/>
        <dbReference type="ChEBI" id="CHEBI:15378"/>
        <dbReference type="ChEBI" id="CHEBI:37565"/>
        <dbReference type="ChEBI" id="CHEBI:43474"/>
        <dbReference type="ChEBI" id="CHEBI:58189"/>
        <dbReference type="EC" id="3.6.5.3"/>
    </reaction>
    <physiologicalReaction direction="left-to-right" evidence="2">
        <dbReference type="Rhea" id="RHEA:19670"/>
    </physiologicalReaction>
</comment>
<comment type="subcellular location">
    <subcellularLocation>
        <location evidence="2">Cytoplasm</location>
    </subcellularLocation>
</comment>
<comment type="similarity">
    <text evidence="2">Belongs to the TRAFAC class translation factor GTPase superfamily. Classic translation factor GTPase family. EF-Tu/EF-1A subfamily.</text>
</comment>
<proteinExistence type="inferred from homology"/>
<dbReference type="EC" id="3.6.5.3" evidence="2"/>
<dbReference type="EMBL" id="D32120">
    <property type="protein sequence ID" value="BAA06845.1"/>
    <property type="molecule type" value="Genomic_DNA"/>
</dbReference>
<dbReference type="EMBL" id="AE004437">
    <property type="protein sequence ID" value="AAG20682.1"/>
    <property type="molecule type" value="Genomic_DNA"/>
</dbReference>
<dbReference type="PIR" id="F84414">
    <property type="entry name" value="F84414"/>
</dbReference>
<dbReference type="PIR" id="T09379">
    <property type="entry name" value="T09379"/>
</dbReference>
<dbReference type="RefSeq" id="WP_010903986.1">
    <property type="nucleotide sequence ID" value="NC_002607.1"/>
</dbReference>
<dbReference type="SMR" id="Q9HM89"/>
<dbReference type="FunCoup" id="Q9HM89">
    <property type="interactions" value="108"/>
</dbReference>
<dbReference type="STRING" id="64091.VNG_2649G"/>
<dbReference type="PaxDb" id="64091-VNG_2649G"/>
<dbReference type="GeneID" id="89348630"/>
<dbReference type="KEGG" id="hal:VNG_2649G"/>
<dbReference type="PATRIC" id="fig|64091.14.peg.2058"/>
<dbReference type="HOGENOM" id="CLU_007265_3_5_2"/>
<dbReference type="InParanoid" id="Q9HM89"/>
<dbReference type="OrthoDB" id="371718at2157"/>
<dbReference type="PhylomeDB" id="Q9HM89"/>
<dbReference type="Proteomes" id="UP000000554">
    <property type="component" value="Chromosome"/>
</dbReference>
<dbReference type="GO" id="GO:0005737">
    <property type="term" value="C:cytoplasm"/>
    <property type="evidence" value="ECO:0007669"/>
    <property type="project" value="UniProtKB-SubCell"/>
</dbReference>
<dbReference type="GO" id="GO:0005525">
    <property type="term" value="F:GTP binding"/>
    <property type="evidence" value="ECO:0007669"/>
    <property type="project" value="UniProtKB-UniRule"/>
</dbReference>
<dbReference type="GO" id="GO:0003924">
    <property type="term" value="F:GTPase activity"/>
    <property type="evidence" value="ECO:0007669"/>
    <property type="project" value="InterPro"/>
</dbReference>
<dbReference type="GO" id="GO:0003746">
    <property type="term" value="F:translation elongation factor activity"/>
    <property type="evidence" value="ECO:0007669"/>
    <property type="project" value="UniProtKB-UniRule"/>
</dbReference>
<dbReference type="CDD" id="cd01883">
    <property type="entry name" value="EF1_alpha"/>
    <property type="match status" value="1"/>
</dbReference>
<dbReference type="CDD" id="cd03693">
    <property type="entry name" value="EF1_alpha_II"/>
    <property type="match status" value="1"/>
</dbReference>
<dbReference type="CDD" id="cd03705">
    <property type="entry name" value="EF1_alpha_III"/>
    <property type="match status" value="1"/>
</dbReference>
<dbReference type="FunFam" id="2.40.30.10:FF:000003">
    <property type="entry name" value="Elongation factor 1-alpha"/>
    <property type="match status" value="1"/>
</dbReference>
<dbReference type="FunFam" id="2.40.30.10:FF:000005">
    <property type="entry name" value="Elongation factor 1-alpha"/>
    <property type="match status" value="1"/>
</dbReference>
<dbReference type="Gene3D" id="3.40.50.300">
    <property type="entry name" value="P-loop containing nucleotide triphosphate hydrolases"/>
    <property type="match status" value="1"/>
</dbReference>
<dbReference type="Gene3D" id="2.40.30.10">
    <property type="entry name" value="Translation factors"/>
    <property type="match status" value="2"/>
</dbReference>
<dbReference type="HAMAP" id="MF_00118_A">
    <property type="entry name" value="EF_Tu_A"/>
    <property type="match status" value="1"/>
</dbReference>
<dbReference type="InterPro" id="IPR004161">
    <property type="entry name" value="EFTu-like_2"/>
</dbReference>
<dbReference type="InterPro" id="IPR031157">
    <property type="entry name" value="G_TR_CS"/>
</dbReference>
<dbReference type="InterPro" id="IPR054696">
    <property type="entry name" value="GTP-eEF1A_C"/>
</dbReference>
<dbReference type="InterPro" id="IPR027417">
    <property type="entry name" value="P-loop_NTPase"/>
</dbReference>
<dbReference type="InterPro" id="IPR005225">
    <property type="entry name" value="Small_GTP-bd"/>
</dbReference>
<dbReference type="InterPro" id="IPR000795">
    <property type="entry name" value="T_Tr_GTP-bd_dom"/>
</dbReference>
<dbReference type="InterPro" id="IPR050100">
    <property type="entry name" value="TRAFAC_GTPase_members"/>
</dbReference>
<dbReference type="InterPro" id="IPR009000">
    <property type="entry name" value="Transl_B-barrel_sf"/>
</dbReference>
<dbReference type="InterPro" id="IPR009001">
    <property type="entry name" value="Transl_elong_EF1A/Init_IF2_C"/>
</dbReference>
<dbReference type="InterPro" id="IPR004539">
    <property type="entry name" value="Transl_elong_EF1A_euk/arc"/>
</dbReference>
<dbReference type="NCBIfam" id="TIGR00483">
    <property type="entry name" value="EF-1_alpha"/>
    <property type="match status" value="1"/>
</dbReference>
<dbReference type="NCBIfam" id="NF008969">
    <property type="entry name" value="PRK12317.1"/>
    <property type="match status" value="1"/>
</dbReference>
<dbReference type="NCBIfam" id="TIGR00231">
    <property type="entry name" value="small_GTP"/>
    <property type="match status" value="1"/>
</dbReference>
<dbReference type="PANTHER" id="PTHR23115">
    <property type="entry name" value="TRANSLATION FACTOR"/>
    <property type="match status" value="1"/>
</dbReference>
<dbReference type="Pfam" id="PF22594">
    <property type="entry name" value="GTP-eEF1A_C"/>
    <property type="match status" value="1"/>
</dbReference>
<dbReference type="Pfam" id="PF00009">
    <property type="entry name" value="GTP_EFTU"/>
    <property type="match status" value="1"/>
</dbReference>
<dbReference type="Pfam" id="PF03144">
    <property type="entry name" value="GTP_EFTU_D2"/>
    <property type="match status" value="1"/>
</dbReference>
<dbReference type="PRINTS" id="PR00315">
    <property type="entry name" value="ELONGATNFCT"/>
</dbReference>
<dbReference type="SUPFAM" id="SSF50465">
    <property type="entry name" value="EF-Tu/eEF-1alpha/eIF2-gamma C-terminal domain"/>
    <property type="match status" value="1"/>
</dbReference>
<dbReference type="SUPFAM" id="SSF52540">
    <property type="entry name" value="P-loop containing nucleoside triphosphate hydrolases"/>
    <property type="match status" value="1"/>
</dbReference>
<dbReference type="SUPFAM" id="SSF50447">
    <property type="entry name" value="Translation proteins"/>
    <property type="match status" value="1"/>
</dbReference>
<dbReference type="PROSITE" id="PS00301">
    <property type="entry name" value="G_TR_1"/>
    <property type="match status" value="1"/>
</dbReference>
<dbReference type="PROSITE" id="PS51722">
    <property type="entry name" value="G_TR_2"/>
    <property type="match status" value="1"/>
</dbReference>
<keyword id="KW-0963">Cytoplasm</keyword>
<keyword id="KW-0251">Elongation factor</keyword>
<keyword id="KW-0342">GTP-binding</keyword>
<keyword id="KW-0378">Hydrolase</keyword>
<keyword id="KW-0460">Magnesium</keyword>
<keyword id="KW-0479">Metal-binding</keyword>
<keyword id="KW-0547">Nucleotide-binding</keyword>
<keyword id="KW-0648">Protein biosynthesis</keyword>
<keyword id="KW-1185">Reference proteome</keyword>